<proteinExistence type="inferred from homology"/>
<reference key="1">
    <citation type="journal article" date="2015" name="Proc. Natl. Acad. Sci. U.S.A.">
        <title>Trichodesmium genome maintains abundant, widespread noncoding DNA in situ, despite oligotrophic lifestyle.</title>
        <authorList>
            <person name="Walworth N."/>
            <person name="Pfreundt U."/>
            <person name="Nelson W.C."/>
            <person name="Mincer T."/>
            <person name="Heidelberg J.F."/>
            <person name="Fu F."/>
            <person name="Waterbury J.B."/>
            <person name="Glavina del Rio T."/>
            <person name="Goodwin L."/>
            <person name="Kyrpides N.C."/>
            <person name="Land M.L."/>
            <person name="Woyke T."/>
            <person name="Hutchins D.A."/>
            <person name="Hess W.R."/>
            <person name="Webb E.A."/>
        </authorList>
    </citation>
    <scope>NUCLEOTIDE SEQUENCE [LARGE SCALE GENOMIC DNA]</scope>
    <source>
        <strain>IMS101</strain>
    </source>
</reference>
<gene>
    <name evidence="1" type="primary">recO</name>
    <name type="ordered locus">Tery_4604</name>
</gene>
<accession>Q10VZ5</accession>
<comment type="function">
    <text evidence="1">Involved in DNA repair and RecF pathway recombination.</text>
</comment>
<comment type="similarity">
    <text evidence="1">Belongs to the RecO family.</text>
</comment>
<evidence type="ECO:0000255" key="1">
    <source>
        <dbReference type="HAMAP-Rule" id="MF_00201"/>
    </source>
</evidence>
<dbReference type="EMBL" id="CP000393">
    <property type="protein sequence ID" value="ABG53579.1"/>
    <property type="molecule type" value="Genomic_DNA"/>
</dbReference>
<dbReference type="RefSeq" id="WP_011613896.1">
    <property type="nucleotide sequence ID" value="NC_008312.1"/>
</dbReference>
<dbReference type="SMR" id="Q10VZ5"/>
<dbReference type="STRING" id="203124.Tery_4604"/>
<dbReference type="KEGG" id="ter:Tery_4604"/>
<dbReference type="eggNOG" id="COG1381">
    <property type="taxonomic scope" value="Bacteria"/>
</dbReference>
<dbReference type="HOGENOM" id="CLU_066632_0_0_3"/>
<dbReference type="OrthoDB" id="9797083at2"/>
<dbReference type="GO" id="GO:0043590">
    <property type="term" value="C:bacterial nucleoid"/>
    <property type="evidence" value="ECO:0007669"/>
    <property type="project" value="TreeGrafter"/>
</dbReference>
<dbReference type="GO" id="GO:0006310">
    <property type="term" value="P:DNA recombination"/>
    <property type="evidence" value="ECO:0007669"/>
    <property type="project" value="UniProtKB-UniRule"/>
</dbReference>
<dbReference type="GO" id="GO:0006302">
    <property type="term" value="P:double-strand break repair"/>
    <property type="evidence" value="ECO:0007669"/>
    <property type="project" value="TreeGrafter"/>
</dbReference>
<dbReference type="Gene3D" id="2.40.50.140">
    <property type="entry name" value="Nucleic acid-binding proteins"/>
    <property type="match status" value="1"/>
</dbReference>
<dbReference type="Gene3D" id="1.20.1440.120">
    <property type="entry name" value="Recombination protein O, C-terminal domain"/>
    <property type="match status" value="1"/>
</dbReference>
<dbReference type="HAMAP" id="MF_00201">
    <property type="entry name" value="RecO"/>
    <property type="match status" value="1"/>
</dbReference>
<dbReference type="InterPro" id="IPR037278">
    <property type="entry name" value="ARFGAP/RecO"/>
</dbReference>
<dbReference type="InterPro" id="IPR022572">
    <property type="entry name" value="DNA_rep/recomb_RecO_N"/>
</dbReference>
<dbReference type="InterPro" id="IPR012340">
    <property type="entry name" value="NA-bd_OB-fold"/>
</dbReference>
<dbReference type="InterPro" id="IPR003717">
    <property type="entry name" value="RecO"/>
</dbReference>
<dbReference type="InterPro" id="IPR042242">
    <property type="entry name" value="RecO_C"/>
</dbReference>
<dbReference type="NCBIfam" id="TIGR00613">
    <property type="entry name" value="reco"/>
    <property type="match status" value="1"/>
</dbReference>
<dbReference type="PANTHER" id="PTHR33991">
    <property type="entry name" value="DNA REPAIR PROTEIN RECO"/>
    <property type="match status" value="1"/>
</dbReference>
<dbReference type="PANTHER" id="PTHR33991:SF1">
    <property type="entry name" value="DNA REPAIR PROTEIN RECO"/>
    <property type="match status" value="1"/>
</dbReference>
<dbReference type="Pfam" id="PF02565">
    <property type="entry name" value="RecO_C"/>
    <property type="match status" value="1"/>
</dbReference>
<dbReference type="Pfam" id="PF11967">
    <property type="entry name" value="RecO_N"/>
    <property type="match status" value="1"/>
</dbReference>
<dbReference type="SUPFAM" id="SSF57863">
    <property type="entry name" value="ArfGap/RecO-like zinc finger"/>
    <property type="match status" value="1"/>
</dbReference>
<dbReference type="SUPFAM" id="SSF50249">
    <property type="entry name" value="Nucleic acid-binding proteins"/>
    <property type="match status" value="1"/>
</dbReference>
<sequence>MAKLYKATGINLKAMALGESDRLLTILTPEYGLIRVVAPGVRKQKSKLGGRGELFVVNQLLISKGRSLDRINQAETITSYTGLSQNLGKLAAGQYLAELVQQIALKENPQTELFHLLNEHLERIEQLQHKTDRLWSTQLIAFLAHGIYHLLAIEGIAPQVHQCCATGNELQPDFNNSKWQVGFSIDAGGIIKVDETSVVQSFCKDLSDYYLSTKINTLINANQLSLLQQLPQPQLQTIVKLTSYQDWVKVEQLLRKYTQYHLGYSIRSAELIDTYLKSISPLINNATI</sequence>
<protein>
    <recommendedName>
        <fullName evidence="1">DNA repair protein RecO</fullName>
    </recommendedName>
    <alternativeName>
        <fullName evidence="1">Recombination protein O</fullName>
    </alternativeName>
</protein>
<keyword id="KW-0227">DNA damage</keyword>
<keyword id="KW-0233">DNA recombination</keyword>
<keyword id="KW-0234">DNA repair</keyword>
<name>RECO_TRIEI</name>
<feature type="chain" id="PRO_0000264855" description="DNA repair protein RecO">
    <location>
        <begin position="1"/>
        <end position="288"/>
    </location>
</feature>
<organism>
    <name type="scientific">Trichodesmium erythraeum (strain IMS101)</name>
    <dbReference type="NCBI Taxonomy" id="203124"/>
    <lineage>
        <taxon>Bacteria</taxon>
        <taxon>Bacillati</taxon>
        <taxon>Cyanobacteriota</taxon>
        <taxon>Cyanophyceae</taxon>
        <taxon>Oscillatoriophycideae</taxon>
        <taxon>Oscillatoriales</taxon>
        <taxon>Microcoleaceae</taxon>
        <taxon>Trichodesmium</taxon>
    </lineage>
</organism>